<protein>
    <recommendedName>
        <fullName evidence="1">Large ribosomal subunit protein bL9</fullName>
    </recommendedName>
    <alternativeName>
        <fullName evidence="2">50S ribosomal protein L9</fullName>
    </alternativeName>
</protein>
<keyword id="KW-1185">Reference proteome</keyword>
<keyword id="KW-0687">Ribonucleoprotein</keyword>
<keyword id="KW-0689">Ribosomal protein</keyword>
<keyword id="KW-0694">RNA-binding</keyword>
<keyword id="KW-0699">rRNA-binding</keyword>
<dbReference type="EMBL" id="CP000544">
    <property type="protein sequence ID" value="ABM61436.1"/>
    <property type="molecule type" value="Genomic_DNA"/>
</dbReference>
<dbReference type="RefSeq" id="WP_011813459.1">
    <property type="nucleotide sequence ID" value="NC_008789.1"/>
</dbReference>
<dbReference type="SMR" id="A1WUS4"/>
<dbReference type="STRING" id="349124.Hhal_0654"/>
<dbReference type="KEGG" id="hha:Hhal_0654"/>
<dbReference type="eggNOG" id="COG0359">
    <property type="taxonomic scope" value="Bacteria"/>
</dbReference>
<dbReference type="HOGENOM" id="CLU_078938_4_1_6"/>
<dbReference type="OrthoDB" id="9788336at2"/>
<dbReference type="Proteomes" id="UP000000647">
    <property type="component" value="Chromosome"/>
</dbReference>
<dbReference type="GO" id="GO:1990904">
    <property type="term" value="C:ribonucleoprotein complex"/>
    <property type="evidence" value="ECO:0007669"/>
    <property type="project" value="UniProtKB-KW"/>
</dbReference>
<dbReference type="GO" id="GO:0005840">
    <property type="term" value="C:ribosome"/>
    <property type="evidence" value="ECO:0007669"/>
    <property type="project" value="UniProtKB-KW"/>
</dbReference>
<dbReference type="GO" id="GO:0019843">
    <property type="term" value="F:rRNA binding"/>
    <property type="evidence" value="ECO:0007669"/>
    <property type="project" value="UniProtKB-UniRule"/>
</dbReference>
<dbReference type="GO" id="GO:0003735">
    <property type="term" value="F:structural constituent of ribosome"/>
    <property type="evidence" value="ECO:0007669"/>
    <property type="project" value="InterPro"/>
</dbReference>
<dbReference type="GO" id="GO:0006412">
    <property type="term" value="P:translation"/>
    <property type="evidence" value="ECO:0007669"/>
    <property type="project" value="UniProtKB-UniRule"/>
</dbReference>
<dbReference type="Gene3D" id="3.10.430.100">
    <property type="entry name" value="Ribosomal protein L9, C-terminal domain"/>
    <property type="match status" value="1"/>
</dbReference>
<dbReference type="Gene3D" id="3.40.5.10">
    <property type="entry name" value="Ribosomal protein L9, N-terminal domain"/>
    <property type="match status" value="1"/>
</dbReference>
<dbReference type="HAMAP" id="MF_00503">
    <property type="entry name" value="Ribosomal_bL9"/>
    <property type="match status" value="1"/>
</dbReference>
<dbReference type="InterPro" id="IPR000244">
    <property type="entry name" value="Ribosomal_bL9"/>
</dbReference>
<dbReference type="InterPro" id="IPR009027">
    <property type="entry name" value="Ribosomal_bL9/RNase_H1_N"/>
</dbReference>
<dbReference type="InterPro" id="IPR020594">
    <property type="entry name" value="Ribosomal_bL9_bac/chp"/>
</dbReference>
<dbReference type="InterPro" id="IPR020069">
    <property type="entry name" value="Ribosomal_bL9_C"/>
</dbReference>
<dbReference type="InterPro" id="IPR036791">
    <property type="entry name" value="Ribosomal_bL9_C_sf"/>
</dbReference>
<dbReference type="InterPro" id="IPR020070">
    <property type="entry name" value="Ribosomal_bL9_N"/>
</dbReference>
<dbReference type="InterPro" id="IPR036935">
    <property type="entry name" value="Ribosomal_bL9_N_sf"/>
</dbReference>
<dbReference type="NCBIfam" id="TIGR00158">
    <property type="entry name" value="L9"/>
    <property type="match status" value="1"/>
</dbReference>
<dbReference type="PANTHER" id="PTHR21368">
    <property type="entry name" value="50S RIBOSOMAL PROTEIN L9"/>
    <property type="match status" value="1"/>
</dbReference>
<dbReference type="Pfam" id="PF03948">
    <property type="entry name" value="Ribosomal_L9_C"/>
    <property type="match status" value="1"/>
</dbReference>
<dbReference type="Pfam" id="PF01281">
    <property type="entry name" value="Ribosomal_L9_N"/>
    <property type="match status" value="1"/>
</dbReference>
<dbReference type="SUPFAM" id="SSF55658">
    <property type="entry name" value="L9 N-domain-like"/>
    <property type="match status" value="1"/>
</dbReference>
<dbReference type="SUPFAM" id="SSF55653">
    <property type="entry name" value="Ribosomal protein L9 C-domain"/>
    <property type="match status" value="1"/>
</dbReference>
<dbReference type="PROSITE" id="PS00651">
    <property type="entry name" value="RIBOSOMAL_L9"/>
    <property type="match status" value="1"/>
</dbReference>
<sequence length="150" mass="16549">MELILLEKVSNLGNLGDRVRVRPGYGRNYLLPYGKAKMATEENIRYFEERRAELEKAAREAEQAAQARLEQLQELTLTIKAKVGEQGKLFGSVGPADIAEAAEQAGVELARREVRMPEGPIRVAGEYDVQVSLYTDVEGTVKVVVEGDAS</sequence>
<proteinExistence type="inferred from homology"/>
<comment type="function">
    <text evidence="1">Binds to the 23S rRNA.</text>
</comment>
<comment type="similarity">
    <text evidence="1">Belongs to the bacterial ribosomal protein bL9 family.</text>
</comment>
<feature type="chain" id="PRO_1000014789" description="Large ribosomal subunit protein bL9">
    <location>
        <begin position="1"/>
        <end position="150"/>
    </location>
</feature>
<organism>
    <name type="scientific">Halorhodospira halophila (strain DSM 244 / SL1)</name>
    <name type="common">Ectothiorhodospira halophila (strain DSM 244 / SL1)</name>
    <dbReference type="NCBI Taxonomy" id="349124"/>
    <lineage>
        <taxon>Bacteria</taxon>
        <taxon>Pseudomonadati</taxon>
        <taxon>Pseudomonadota</taxon>
        <taxon>Gammaproteobacteria</taxon>
        <taxon>Chromatiales</taxon>
        <taxon>Ectothiorhodospiraceae</taxon>
        <taxon>Halorhodospira</taxon>
    </lineage>
</organism>
<reference key="1">
    <citation type="submission" date="2006-12" db="EMBL/GenBank/DDBJ databases">
        <title>Complete sequence of Halorhodospira halophila SL1.</title>
        <authorList>
            <consortium name="US DOE Joint Genome Institute"/>
            <person name="Copeland A."/>
            <person name="Lucas S."/>
            <person name="Lapidus A."/>
            <person name="Barry K."/>
            <person name="Detter J.C."/>
            <person name="Glavina del Rio T."/>
            <person name="Hammon N."/>
            <person name="Israni S."/>
            <person name="Dalin E."/>
            <person name="Tice H."/>
            <person name="Pitluck S."/>
            <person name="Saunders E."/>
            <person name="Brettin T."/>
            <person name="Bruce D."/>
            <person name="Han C."/>
            <person name="Tapia R."/>
            <person name="Schmutz J."/>
            <person name="Larimer F."/>
            <person name="Land M."/>
            <person name="Hauser L."/>
            <person name="Kyrpides N."/>
            <person name="Mikhailova N."/>
            <person name="Hoff W."/>
            <person name="Richardson P."/>
        </authorList>
    </citation>
    <scope>NUCLEOTIDE SEQUENCE [LARGE SCALE GENOMIC DNA]</scope>
    <source>
        <strain>DSM 244 / SL1</strain>
    </source>
</reference>
<name>RL9_HALHL</name>
<evidence type="ECO:0000255" key="1">
    <source>
        <dbReference type="HAMAP-Rule" id="MF_00503"/>
    </source>
</evidence>
<evidence type="ECO:0000305" key="2"/>
<accession>A1WUS4</accession>
<gene>
    <name evidence="1" type="primary">rplI</name>
    <name type="ordered locus">Hhal_0654</name>
</gene>